<feature type="propeptide" id="PRO_0000316098" description="Removed in mature form" evidence="2">
    <location>
        <begin position="1"/>
        <end position="3"/>
    </location>
</feature>
<feature type="chain" id="PRO_0000068823" description="Petal death protein">
    <location>
        <begin position="4"/>
        <end position="318"/>
    </location>
</feature>
<feature type="region of interest" description="Disordered" evidence="1">
    <location>
        <begin position="1"/>
        <end position="24"/>
    </location>
</feature>
<feature type="binding site" evidence="3 9">
    <location>
        <position position="107"/>
    </location>
    <ligand>
        <name>Mg(2+)</name>
        <dbReference type="ChEBI" id="CHEBI:18420"/>
    </ligand>
</feature>
<feature type="binding site" evidence="3 9">
    <location>
        <position position="109"/>
    </location>
    <ligand>
        <name>Mg(2+)</name>
        <dbReference type="ChEBI" id="CHEBI:18420"/>
    </ligand>
</feature>
<feature type="binding site" evidence="3 9">
    <location>
        <position position="142"/>
    </location>
    <ligand>
        <name>Mg(2+)</name>
        <dbReference type="ChEBI" id="CHEBI:18420"/>
    </ligand>
</feature>
<feature type="mutagenesis site" description="Reduces catalytic efficiency 1000-fold." evidence="2">
    <original>D</original>
    <variation>A</variation>
    <location>
        <position position="79"/>
    </location>
</feature>
<feature type="mutagenesis site" description="Loss of catalytic activity." evidence="2">
    <original>C</original>
    <variation>A</variation>
    <location>
        <position position="144"/>
    </location>
</feature>
<feature type="helix" evidence="10">
    <location>
        <begin position="30"/>
        <end position="37"/>
    </location>
</feature>
<feature type="strand" evidence="10">
    <location>
        <begin position="38"/>
        <end position="46"/>
    </location>
</feature>
<feature type="helix" evidence="10">
    <location>
        <begin position="49"/>
        <end position="57"/>
    </location>
</feature>
<feature type="strand" evidence="10">
    <location>
        <begin position="61"/>
        <end position="65"/>
    </location>
</feature>
<feature type="helix" evidence="10">
    <location>
        <begin position="67"/>
        <end position="73"/>
    </location>
</feature>
<feature type="strand" evidence="10">
    <location>
        <begin position="79"/>
        <end position="81"/>
    </location>
</feature>
<feature type="helix" evidence="10">
    <location>
        <begin position="85"/>
        <end position="98"/>
    </location>
</feature>
<feature type="strand" evidence="10">
    <location>
        <begin position="99"/>
        <end position="107"/>
    </location>
</feature>
<feature type="strand" evidence="10">
    <location>
        <begin position="112"/>
        <end position="114"/>
    </location>
</feature>
<feature type="helix" evidence="10">
    <location>
        <begin position="115"/>
        <end position="127"/>
    </location>
</feature>
<feature type="strand" evidence="10">
    <location>
        <begin position="132"/>
        <end position="136"/>
    </location>
</feature>
<feature type="strand" evidence="10">
    <location>
        <begin position="145"/>
        <end position="148"/>
    </location>
</feature>
<feature type="helix" evidence="10">
    <location>
        <begin position="155"/>
        <end position="169"/>
    </location>
</feature>
<feature type="strand" evidence="10">
    <location>
        <begin position="175"/>
        <end position="180"/>
    </location>
</feature>
<feature type="helix" evidence="10">
    <location>
        <begin position="183"/>
        <end position="200"/>
    </location>
</feature>
<feature type="strand" evidence="10">
    <location>
        <begin position="204"/>
        <end position="208"/>
    </location>
</feature>
<feature type="helix" evidence="10">
    <location>
        <begin position="214"/>
        <end position="223"/>
    </location>
</feature>
<feature type="strand" evidence="10">
    <location>
        <begin position="226"/>
        <end position="232"/>
    </location>
</feature>
<feature type="strand" evidence="10">
    <location>
        <begin position="236"/>
        <end position="238"/>
    </location>
</feature>
<feature type="helix" evidence="10">
    <location>
        <begin position="243"/>
        <end position="249"/>
    </location>
</feature>
<feature type="strand" evidence="10">
    <location>
        <begin position="253"/>
        <end position="256"/>
    </location>
</feature>
<feature type="helix" evidence="10">
    <location>
        <begin position="259"/>
        <end position="278"/>
    </location>
</feature>
<feature type="helix" evidence="10">
    <location>
        <begin position="285"/>
        <end position="287"/>
    </location>
</feature>
<feature type="helix" evidence="10">
    <location>
        <begin position="291"/>
        <end position="298"/>
    </location>
</feature>
<feature type="helix" evidence="10">
    <location>
        <begin position="300"/>
        <end position="309"/>
    </location>
</feature>
<keyword id="KW-0002">3D-structure</keyword>
<keyword id="KW-0903">Direct protein sequencing</keyword>
<keyword id="KW-0378">Hydrolase</keyword>
<keyword id="KW-0456">Lyase</keyword>
<keyword id="KW-0460">Magnesium</keyword>
<keyword id="KW-0479">Metal-binding</keyword>
<keyword id="KW-0808">Transferase</keyword>
<dbReference type="EC" id="3.7.1.1" evidence="2"/>
<dbReference type="EC" id="4.1.3.-" evidence="2"/>
<dbReference type="EMBL" id="L11598">
    <property type="protein sequence ID" value="AAA02862.1"/>
    <property type="molecule type" value="mRNA"/>
</dbReference>
<dbReference type="PIR" id="S35145">
    <property type="entry name" value="S35145"/>
</dbReference>
<dbReference type="PDB" id="1ZLP">
    <property type="method" value="X-ray"/>
    <property type="resolution" value="2.70 A"/>
    <property type="chains" value="A/B=1-318"/>
</dbReference>
<dbReference type="PDBsum" id="1ZLP"/>
<dbReference type="SMR" id="Q05957"/>
<dbReference type="BRENDA" id="4.1.3.1">
    <property type="organism ID" value="1925"/>
</dbReference>
<dbReference type="EvolutionaryTrace" id="Q05957"/>
<dbReference type="GO" id="GO:0047776">
    <property type="term" value="F:citramalate lyase activity"/>
    <property type="evidence" value="ECO:0000314"/>
    <property type="project" value="UniProtKB"/>
</dbReference>
<dbReference type="GO" id="GO:0000287">
    <property type="term" value="F:magnesium ion binding"/>
    <property type="evidence" value="ECO:0000314"/>
    <property type="project" value="UniProtKB"/>
</dbReference>
<dbReference type="GO" id="GO:0030603">
    <property type="term" value="F:oxaloacetase activity"/>
    <property type="evidence" value="ECO:0000314"/>
    <property type="project" value="UniProtKB"/>
</dbReference>
<dbReference type="GO" id="GO:0042803">
    <property type="term" value="F:protein homodimerization activity"/>
    <property type="evidence" value="ECO:0000314"/>
    <property type="project" value="UniProtKB"/>
</dbReference>
<dbReference type="GO" id="GO:0016740">
    <property type="term" value="F:transferase activity"/>
    <property type="evidence" value="ECO:0007669"/>
    <property type="project" value="UniProtKB-KW"/>
</dbReference>
<dbReference type="GO" id="GO:0006107">
    <property type="term" value="P:oxaloacetate metabolic process"/>
    <property type="evidence" value="ECO:0000314"/>
    <property type="project" value="UniProtKB"/>
</dbReference>
<dbReference type="CDD" id="cd00377">
    <property type="entry name" value="ICL_PEPM"/>
    <property type="match status" value="1"/>
</dbReference>
<dbReference type="FunFam" id="3.20.20.60:FF:000009">
    <property type="entry name" value="2-methylisocitrate lyase"/>
    <property type="match status" value="1"/>
</dbReference>
<dbReference type="Gene3D" id="3.20.20.60">
    <property type="entry name" value="Phosphoenolpyruvate-binding domains"/>
    <property type="match status" value="1"/>
</dbReference>
<dbReference type="InterPro" id="IPR039556">
    <property type="entry name" value="ICL/PEPM"/>
</dbReference>
<dbReference type="InterPro" id="IPR018523">
    <property type="entry name" value="Isocitrate_lyase_ph_CS"/>
</dbReference>
<dbReference type="InterPro" id="IPR015813">
    <property type="entry name" value="Pyrv/PenolPyrv_kinase-like_dom"/>
</dbReference>
<dbReference type="InterPro" id="IPR040442">
    <property type="entry name" value="Pyrv_kinase-like_dom_sf"/>
</dbReference>
<dbReference type="PANTHER" id="PTHR42905:SF5">
    <property type="entry name" value="CARBOXYVINYL-CARBOXYPHOSPHONATE PHOSPHORYLMUTASE, CHLOROPLASTIC"/>
    <property type="match status" value="1"/>
</dbReference>
<dbReference type="PANTHER" id="PTHR42905">
    <property type="entry name" value="PHOSPHOENOLPYRUVATE CARBOXYLASE"/>
    <property type="match status" value="1"/>
</dbReference>
<dbReference type="Pfam" id="PF13714">
    <property type="entry name" value="PEP_mutase"/>
    <property type="match status" value="1"/>
</dbReference>
<dbReference type="SUPFAM" id="SSF51621">
    <property type="entry name" value="Phosphoenolpyruvate/pyruvate domain"/>
    <property type="match status" value="1"/>
</dbReference>
<dbReference type="PROSITE" id="PS00161">
    <property type="entry name" value="ISOCITRATE_LYASE"/>
    <property type="match status" value="1"/>
</dbReference>
<organism>
    <name type="scientific">Dianthus caryophyllus</name>
    <name type="common">Carnation</name>
    <name type="synonym">Clove pink</name>
    <dbReference type="NCBI Taxonomy" id="3570"/>
    <lineage>
        <taxon>Eukaryota</taxon>
        <taxon>Viridiplantae</taxon>
        <taxon>Streptophyta</taxon>
        <taxon>Embryophyta</taxon>
        <taxon>Tracheophyta</taxon>
        <taxon>Spermatophyta</taxon>
        <taxon>Magnoliopsida</taxon>
        <taxon>eudicotyledons</taxon>
        <taxon>Gunneridae</taxon>
        <taxon>Pentapetalae</taxon>
        <taxon>Caryophyllales</taxon>
        <taxon>Caryophyllaceae</taxon>
        <taxon>Caryophylleae</taxon>
        <taxon>Dianthus</taxon>
    </lineage>
</organism>
<evidence type="ECO:0000256" key="1">
    <source>
        <dbReference type="SAM" id="MobiDB-lite"/>
    </source>
</evidence>
<evidence type="ECO:0000269" key="2">
    <source>
    </source>
</evidence>
<evidence type="ECO:0000269" key="3">
    <source>
    </source>
</evidence>
<evidence type="ECO:0000269" key="4">
    <source>
    </source>
</evidence>
<evidence type="ECO:0000303" key="5">
    <source>
    </source>
</evidence>
<evidence type="ECO:0000303" key="6">
    <source>
    </source>
</evidence>
<evidence type="ECO:0000305" key="7"/>
<evidence type="ECO:0000305" key="8">
    <source>
    </source>
</evidence>
<evidence type="ECO:0007744" key="9">
    <source>
        <dbReference type="PDB" id="1ZLP"/>
    </source>
</evidence>
<evidence type="ECO:0007829" key="10">
    <source>
        <dbReference type="PDB" id="1ZLP"/>
    </source>
</evidence>
<proteinExistence type="evidence at protein level"/>
<accession>Q05957</accession>
<comment type="function">
    <text evidence="2">Catalyzes cleavage of the C(2)-C(3) bond in oxaloacetate and in (2R)-alkyl malate derivatives to form oxalate and acetate, and alkyl carboxylates and R-ketocarboxylates, respectively.</text>
</comment>
<comment type="catalytic activity">
    <reaction evidence="2">
        <text>oxaloacetate + H2O = oxalate + acetate + H(+)</text>
        <dbReference type="Rhea" id="RHEA:24432"/>
        <dbReference type="ChEBI" id="CHEBI:15377"/>
        <dbReference type="ChEBI" id="CHEBI:15378"/>
        <dbReference type="ChEBI" id="CHEBI:16452"/>
        <dbReference type="ChEBI" id="CHEBI:30089"/>
        <dbReference type="ChEBI" id="CHEBI:30623"/>
        <dbReference type="EC" id="3.7.1.1"/>
    </reaction>
</comment>
<comment type="cofactor">
    <cofactor evidence="2">
        <name>Mg(2+)</name>
        <dbReference type="ChEBI" id="CHEBI:18420"/>
    </cofactor>
    <cofactor evidence="2">
        <name>Mn(2+)</name>
        <dbReference type="ChEBI" id="CHEBI:29035"/>
    </cofactor>
    <cofactor evidence="2">
        <name>Fe(2+)</name>
        <dbReference type="ChEBI" id="CHEBI:29033"/>
    </cofactor>
    <cofactor evidence="2">
        <name>Co(2+)</name>
        <dbReference type="ChEBI" id="CHEBI:48828"/>
    </cofactor>
    <text evidence="2">Binds 1 Mg(2+) ion per subunit. Can bind other divalent cations such as Mn(2+), Fe(2+) and Co(2+).</text>
</comment>
<comment type="biophysicochemical properties">
    <kinetics>
        <KM evidence="2">290 uM for (R)-citramalate (at pH 7.5 and 25 degrees Celsius)</KM>
        <KM evidence="2">130 uM for oxaloacetate (at pH 7.5 and 25 degrees Celsius)</KM>
        <KM evidence="2">42 uM for (2R,3S)-isocitrate (at pH 7.5 and 25 degrees Celsius)</KM>
        <KM evidence="2">104 uM for (2R,3R:2S,3S)-2-methyl isocitrate (at pH 7.5 and 25 degrees Celsius)</KM>
        <KM evidence="2">69 uM for (2R,3S:2S,3R)-2-methyl isocitrate (at pH 7.5 and 25 degrees Celsius)</KM>
        <KM evidence="2">1100 uM for (2R)-2-ethyl malate (at pH 7.5 and 25 degrees Celsius)</KM>
        <KM evidence="2">26 uM for (2R,3S)-2,3-dimethyl malate (at pH 7.5 and 25 degrees Celsius)</KM>
        <KM evidence="2">450 uM for (2R)-ethyl-(3S)-methyl malate (at pH 7.5 and 25 degrees Celsius)</KM>
        <KM evidence="2">98 uM for (2R)-propyl-(3S)-methyl malate (at pH 7.5 and 25 degrees Celsius)</KM>
        <KM evidence="2">8000 uM for (2R)-isobutyl-(3S)-methyl malate (at pH 7.5 and 25 degrees Celsius)</KM>
        <KM evidence="2">19 uM for magnesium ion (at pH 7.5 and 25 degrees Celsius)</KM>
        <KM evidence="2">0.7 uM for manganese ion (at pH 7.5 and 25 degrees Celsius)</KM>
        <KM evidence="2">2 uM for cobalt ion (at pH 7.5 and 25 degrees Celsius)</KM>
        <KM evidence="2">6 uM for iron ion (at pH 7.5 and 25 degrees Celsius)</KM>
    </kinetics>
    <phDependence>
        <text evidence="2">Optimum pH is 7.0.</text>
    </phDependence>
</comment>
<comment type="subunit">
    <text evidence="3">Homodimer and homotetramer formed by a dimer of homodimer.</text>
</comment>
<comment type="tissue specificity">
    <text evidence="4">Accumulates in senescing flower petals.</text>
</comment>
<comment type="induction">
    <text evidence="4">By ethylene.</text>
</comment>
<comment type="similarity">
    <text evidence="7">Belongs to the isocitrate lyase/PEP mutase superfamily.</text>
</comment>
<protein>
    <recommendedName>
        <fullName evidence="5">Petal death protein</fullName>
        <ecNumber evidence="2">3.7.1.1</ecNumber>
    </recommendedName>
    <alternativeName>
        <fullName evidence="8">(R)-2-methylmalate lyase</fullName>
        <shortName evidence="7">D-citramalate lyase</shortName>
        <ecNumber evidence="2">4.1.3.-</ecNumber>
    </alternativeName>
    <alternativeName>
        <fullName evidence="7">Oxalacetic hydrolase</fullName>
    </alternativeName>
    <alternativeName>
        <fullName evidence="6">PSR132</fullName>
    </alternativeName>
</protein>
<name>PDP_DIACA</name>
<gene>
    <name evidence="5" type="primary">PDP</name>
</gene>
<reference key="1">
    <citation type="journal article" date="1993" name="Plant Mol. Biol.">
        <title>A flower senescence-related mRNA from carnation encodes a novel protein related to enzymes involved in phosphonate biosynthesis.</title>
        <authorList>
            <person name="Wang H."/>
            <person name="Brandt A.S."/>
            <person name="Woodson W.R."/>
        </authorList>
    </citation>
    <scope>NUCLEOTIDE SEQUENCE [MRNA]</scope>
    <scope>INDUCTION BY ETHYLENE</scope>
    <scope>TISSUE SPECIFICITY</scope>
    <source>
        <strain>cv. White Sim</strain>
        <tissue>Petal</tissue>
    </source>
</reference>
<reference key="2">
    <citation type="journal article" date="2005" name="Biochemistry">
        <title>Diversity of function in the isocitrate lyase enzyme superfamily: the Dianthus caryophyllus petal death protein cleaves alpha-keto and alpha-hydroxycarboxylic acids.</title>
        <authorList>
            <person name="Lu Z."/>
            <person name="Feng X."/>
            <person name="Song L."/>
            <person name="Han Y."/>
            <person name="Kim A."/>
            <person name="Herzberg O."/>
            <person name="Woodson W.R."/>
            <person name="Martin B.M."/>
            <person name="Mariano P.S."/>
            <person name="Dunaway-Mariano D."/>
        </authorList>
    </citation>
    <scope>PROTEIN SEQUENCE OF 4-14</scope>
    <scope>MUTAGENESIS OF ASP-79 AND CYS-144</scope>
    <scope>PROPEPTIDE</scope>
    <scope>FUNCTION</scope>
    <scope>BIOPHYSICOCHEMICAL PROPERTIES</scope>
    <scope>COFACTOR</scope>
    <scope>CATALYTIC ACTIVITY</scope>
</reference>
<reference key="3">
    <citation type="journal article" date="2005" name="Biochemistry">
        <title>Crystal structure of the petal death protein from carnation flower.</title>
        <authorList>
            <person name="Teplyakov A."/>
            <person name="Liu S."/>
            <person name="Lu Z."/>
            <person name="Howard A."/>
            <person name="Dunaway-Mariano D."/>
            <person name="Herzberg O."/>
        </authorList>
    </citation>
    <scope>X-RAY CRYSTALLOGRAPHY (2.7 ANGSTROMS) IN COMPLEX WITH MAGNESIUM ION</scope>
    <scope>DIMERIZATION</scope>
</reference>
<sequence>MAPPNGTTNGETEVATQGSYTAVSTGRKTTMHRLIEEHGSVLMPGVQDALSAAVVEKTGFHAAFVSGYSVSAAMLGLPDFGLLTTTEVVEATRRITAAAPNLCVVVDGDTGGGGPLNVQRFIRELISAGAKGVFLEDQVWPKKCGHMRGKAVVPAEEHALKIAAAREAIGDSDFFLVARTDARAPHGLEEGIRRANLYKEAGADATFVEAPANVDELKEVSAKTKGLRIANMIEGGKTPLHTPEEFKEMGFHLIAHSLTAVYATARALVNIMKILKEKGTTRDDLDQMATFSEFNELISLESWYEMESKFKNFTPKAT</sequence>